<name>INS1_CONIM</name>
<comment type="function">
    <text evidence="2">This venom insulin facilitates prey capture by rapidly inducing hypoglycemic shock. Intraperitoneal injection of this peptide into zebrafish lowers blood glucose with the same potency than human insulin. In vivo, when applied to water, this peptide reduces overall locomotor activity of zebrafish larvae, observed as a significant decrease in the percentage of time spent swimming and movement frequency.</text>
</comment>
<comment type="subunit">
    <text evidence="2">Heterodimer of A and B chains; disulfide-linked.</text>
</comment>
<comment type="subcellular location">
    <subcellularLocation>
        <location evidence="2">Secreted</location>
    </subcellularLocation>
</comment>
<comment type="tissue specificity">
    <text evidence="6">Expressed by the venom gland.</text>
</comment>
<comment type="similarity">
    <text>Belongs to the insulin family.</text>
</comment>
<organism>
    <name type="scientific">Conus imperialis</name>
    <name type="common">Imperial cone</name>
    <dbReference type="NCBI Taxonomy" id="35631"/>
    <lineage>
        <taxon>Eukaryota</taxon>
        <taxon>Metazoa</taxon>
        <taxon>Spiralia</taxon>
        <taxon>Lophotrochozoa</taxon>
        <taxon>Mollusca</taxon>
        <taxon>Gastropoda</taxon>
        <taxon>Caenogastropoda</taxon>
        <taxon>Neogastropoda</taxon>
        <taxon>Conoidea</taxon>
        <taxon>Conidae</taxon>
        <taxon>Conus</taxon>
        <taxon>Stephanoconus</taxon>
    </lineage>
</organism>
<evidence type="ECO:0000250" key="1">
    <source>
        <dbReference type="UniProtKB" id="A0A0B5ABD9"/>
    </source>
</evidence>
<evidence type="ECO:0000250" key="2">
    <source>
        <dbReference type="UniProtKB" id="A0A0B5AC95"/>
    </source>
</evidence>
<evidence type="ECO:0000255" key="3"/>
<evidence type="ECO:0000303" key="4">
    <source>
    </source>
</evidence>
<evidence type="ECO:0000305" key="5"/>
<evidence type="ECO:0000305" key="6">
    <source>
    </source>
</evidence>
<evidence type="ECO:0000312" key="7">
    <source>
        <dbReference type="EMBL" id="AJD85819.1"/>
    </source>
</evidence>
<proteinExistence type="evidence at transcript level"/>
<feature type="signal peptide" evidence="3">
    <location>
        <begin position="1"/>
        <end position="25"/>
    </location>
</feature>
<feature type="peptide" id="PRO_5002112925" description="Con-Ins I1 B chain" evidence="1">
    <location>
        <begin position="26"/>
        <end position="63"/>
    </location>
</feature>
<feature type="propeptide" id="PRO_0000439322" description="C peptide" evidence="1">
    <location>
        <begin position="64"/>
        <end position="111"/>
    </location>
</feature>
<feature type="peptide" id="PRO_0000439323" description="Con-Ins I1 A chain" evidence="1">
    <location>
        <begin position="112"/>
        <end position="150"/>
    </location>
</feature>
<feature type="modified residue" description="4-carboxyglutamate; partial" evidence="2">
    <location>
        <position position="144"/>
    </location>
</feature>
<feature type="disulfide bond" evidence="5">
    <location>
        <begin position="31"/>
        <end position="133"/>
    </location>
</feature>
<feature type="disulfide bond" description="Interchain (between B and A chains)" evidence="2">
    <location>
        <begin position="46"/>
        <end position="136"/>
    </location>
</feature>
<feature type="disulfide bond" description="Interchain (between B and A chains)" evidence="2">
    <location>
        <begin position="58"/>
        <end position="149"/>
    </location>
</feature>
<feature type="disulfide bond" evidence="2">
    <location>
        <begin position="135"/>
        <end position="140"/>
    </location>
</feature>
<protein>
    <recommendedName>
        <fullName evidence="4">Con-Ins Im1</fullName>
    </recommendedName>
    <alternativeName>
        <fullName evidence="7">Insulin 1</fullName>
    </alternativeName>
    <component>
        <recommendedName>
            <fullName evidence="4">Con-Ins I1 B chain</fullName>
        </recommendedName>
    </component>
    <component>
        <recommendedName>
            <fullName evidence="4">Con-Ins I1 A chain</fullName>
        </recommendedName>
    </component>
</protein>
<accession>A0A0B5A7M7</accession>
<sequence>MATSLLSPLLVAMLGFLLHVHVARAGLEHTCTLETRMQGAHPQGICGSKLPDIVHTVCQVMGRGYAGGQRQLRKRTSMIDSDDMEAEGGSRGGFLMSKRRALSYLQKETNPLVMAGYERRGIQKRHGEQGITCECCYNHCSFRELVQYCN</sequence>
<keyword id="KW-0119">Carbohydrate metabolism</keyword>
<keyword id="KW-0165">Cleavage on pair of basic residues</keyword>
<keyword id="KW-1015">Disulfide bond</keyword>
<keyword id="KW-0301">Gamma-carboxyglutamic acid</keyword>
<keyword id="KW-0313">Glucose metabolism</keyword>
<keyword id="KW-0372">Hormone</keyword>
<keyword id="KW-0964">Secreted</keyword>
<keyword id="KW-0732">Signal</keyword>
<keyword id="KW-0800">Toxin</keyword>
<reference key="1">
    <citation type="journal article" date="2015" name="Proc. Natl. Acad. Sci. U.S.A.">
        <title>Specialized insulin is used for chemical warfare by fish-hunting cone snails.</title>
        <authorList>
            <person name="Safavi-Hemami H."/>
            <person name="Gajewiak J."/>
            <person name="Karanth S."/>
            <person name="Robinson S.D."/>
            <person name="Ueberheide B."/>
            <person name="Douglass A.D."/>
            <person name="Schlegel A."/>
            <person name="Imperial J.S."/>
            <person name="Watkins M."/>
            <person name="Bandyopadhyay P.K."/>
            <person name="Yandell M."/>
            <person name="Li Q."/>
            <person name="Purcell A.W."/>
            <person name="Norton R.S."/>
            <person name="Ellgaard L."/>
            <person name="Olivera B.M."/>
        </authorList>
    </citation>
    <scope>NUCLEOTIDE SEQUENCE [MRNA]</scope>
    <source>
        <tissue>Venom gland</tissue>
    </source>
</reference>
<dbReference type="EMBL" id="KP268603">
    <property type="protein sequence ID" value="AJD85819.1"/>
    <property type="molecule type" value="mRNA"/>
</dbReference>
<dbReference type="GO" id="GO:0005576">
    <property type="term" value="C:extracellular region"/>
    <property type="evidence" value="ECO:0007669"/>
    <property type="project" value="UniProtKB-SubCell"/>
</dbReference>
<dbReference type="GO" id="GO:0005179">
    <property type="term" value="F:hormone activity"/>
    <property type="evidence" value="ECO:0007669"/>
    <property type="project" value="UniProtKB-KW"/>
</dbReference>
<dbReference type="GO" id="GO:0090729">
    <property type="term" value="F:toxin activity"/>
    <property type="evidence" value="ECO:0007669"/>
    <property type="project" value="UniProtKB-KW"/>
</dbReference>
<dbReference type="GO" id="GO:0006006">
    <property type="term" value="P:glucose metabolic process"/>
    <property type="evidence" value="ECO:0007669"/>
    <property type="project" value="UniProtKB-KW"/>
</dbReference>
<dbReference type="Gene3D" id="1.10.100.10">
    <property type="entry name" value="Insulin-like"/>
    <property type="match status" value="1"/>
</dbReference>
<dbReference type="InterPro" id="IPR016179">
    <property type="entry name" value="Insulin-like"/>
</dbReference>
<dbReference type="InterPro" id="IPR036438">
    <property type="entry name" value="Insulin-like_sf"/>
</dbReference>
<dbReference type="InterPro" id="IPR016724">
    <property type="entry name" value="Insulin-rel_pep"/>
</dbReference>
<dbReference type="InterPro" id="IPR022353">
    <property type="entry name" value="Insulin_CS"/>
</dbReference>
<dbReference type="InterPro" id="IPR022352">
    <property type="entry name" value="Insulin_family"/>
</dbReference>
<dbReference type="PANTHER" id="PTHR13647:SF4">
    <property type="entry name" value="INSULIN-LIKE PEPTIDE 1-RELATED"/>
    <property type="match status" value="1"/>
</dbReference>
<dbReference type="PANTHER" id="PTHR13647">
    <property type="entry name" value="INSULIN-LIKE PEPTIDE 2-RELATED"/>
    <property type="match status" value="1"/>
</dbReference>
<dbReference type="Pfam" id="PF00049">
    <property type="entry name" value="Insulin"/>
    <property type="match status" value="1"/>
</dbReference>
<dbReference type="PIRSF" id="PIRSF018431">
    <property type="entry name" value="Molluscan_insulin_rel_peptide"/>
    <property type="match status" value="1"/>
</dbReference>
<dbReference type="PRINTS" id="PR00276">
    <property type="entry name" value="INSULINFAMLY"/>
</dbReference>
<dbReference type="SMART" id="SM00078">
    <property type="entry name" value="IlGF"/>
    <property type="match status" value="1"/>
</dbReference>
<dbReference type="SUPFAM" id="SSF56994">
    <property type="entry name" value="Insulin-like"/>
    <property type="match status" value="1"/>
</dbReference>
<dbReference type="PROSITE" id="PS00262">
    <property type="entry name" value="INSULIN"/>
    <property type="match status" value="1"/>
</dbReference>